<sequence>MQVNPSEISELIKRRIENFDAAAEARNEGTVVSVGDGICRIHGLADVMFGEMLEFPDDTFGMALNLERDSVGAVLLGDYQHIKEGATVKCTGRILEVPVGDAMLGRVVDALGRPTDGKGPIKTEGSEPIEKVAPGVITREGVDQPVQTGLKAIDSMVPIGRGQRELIIGDRQTGKTAVAVDAIINQKDSGIKCIYVAVGQKNSTVANVVRKLEEHGAMDNTIVVNAGASESAAMQYIAPYAGCAMGEYFRDRGQDALIIYDDLTKQAWAYRQVSLLLRRPPGREAYPGDVFYLHSRLLERASRINAEEVERRTNGEVKGQTGSLTALPIIETQAGDVSAFVPTNVISITDGQIYLETDLFNSGVRPAVNAGLSVSRVGGSAQTKIIKKLGGGVRLALAQYRELAAFSQFASDLDETTRQQLERGKRTMELMKQGQYEPQSVGEMAFVLFAANEGYVDDVENDQVVRFEKALLDYLRAEHAELLQRITETGDYNDEIHAEMQKAMDAFKKNRTW</sequence>
<protein>
    <recommendedName>
        <fullName evidence="1">ATP synthase subunit alpha</fullName>
        <ecNumber evidence="1">7.1.2.2</ecNumber>
    </recommendedName>
    <alternativeName>
        <fullName evidence="1">ATP synthase F1 sector subunit alpha</fullName>
    </alternativeName>
    <alternativeName>
        <fullName evidence="1">F-ATPase subunit alpha</fullName>
    </alternativeName>
</protein>
<keyword id="KW-0066">ATP synthesis</keyword>
<keyword id="KW-0067">ATP-binding</keyword>
<keyword id="KW-0997">Cell inner membrane</keyword>
<keyword id="KW-1003">Cell membrane</keyword>
<keyword id="KW-0139">CF(1)</keyword>
<keyword id="KW-0375">Hydrogen ion transport</keyword>
<keyword id="KW-0406">Ion transport</keyword>
<keyword id="KW-0472">Membrane</keyword>
<keyword id="KW-0547">Nucleotide-binding</keyword>
<keyword id="KW-1185">Reference proteome</keyword>
<keyword id="KW-1278">Translocase</keyword>
<keyword id="KW-0813">Transport</keyword>
<proteinExistence type="inferred from homology"/>
<accession>A1WZT3</accession>
<name>ATPA_HALHL</name>
<dbReference type="EC" id="7.1.2.2" evidence="1"/>
<dbReference type="EMBL" id="CP000544">
    <property type="protein sequence ID" value="ABM63195.1"/>
    <property type="molecule type" value="Genomic_DNA"/>
</dbReference>
<dbReference type="RefSeq" id="WP_011815217.1">
    <property type="nucleotide sequence ID" value="NC_008789.1"/>
</dbReference>
<dbReference type="SMR" id="A1WZT3"/>
<dbReference type="STRING" id="349124.Hhal_2432"/>
<dbReference type="KEGG" id="hha:Hhal_2432"/>
<dbReference type="eggNOG" id="COG0056">
    <property type="taxonomic scope" value="Bacteria"/>
</dbReference>
<dbReference type="HOGENOM" id="CLU_010091_2_1_6"/>
<dbReference type="OrthoDB" id="9803053at2"/>
<dbReference type="Proteomes" id="UP000000647">
    <property type="component" value="Chromosome"/>
</dbReference>
<dbReference type="GO" id="GO:0005886">
    <property type="term" value="C:plasma membrane"/>
    <property type="evidence" value="ECO:0007669"/>
    <property type="project" value="UniProtKB-SubCell"/>
</dbReference>
<dbReference type="GO" id="GO:0045259">
    <property type="term" value="C:proton-transporting ATP synthase complex"/>
    <property type="evidence" value="ECO:0007669"/>
    <property type="project" value="UniProtKB-KW"/>
</dbReference>
<dbReference type="GO" id="GO:0043531">
    <property type="term" value="F:ADP binding"/>
    <property type="evidence" value="ECO:0007669"/>
    <property type="project" value="TreeGrafter"/>
</dbReference>
<dbReference type="GO" id="GO:0005524">
    <property type="term" value="F:ATP binding"/>
    <property type="evidence" value="ECO:0007669"/>
    <property type="project" value="UniProtKB-UniRule"/>
</dbReference>
<dbReference type="GO" id="GO:0046933">
    <property type="term" value="F:proton-transporting ATP synthase activity, rotational mechanism"/>
    <property type="evidence" value="ECO:0007669"/>
    <property type="project" value="UniProtKB-UniRule"/>
</dbReference>
<dbReference type="CDD" id="cd18113">
    <property type="entry name" value="ATP-synt_F1_alpha_C"/>
    <property type="match status" value="1"/>
</dbReference>
<dbReference type="CDD" id="cd18116">
    <property type="entry name" value="ATP-synt_F1_alpha_N"/>
    <property type="match status" value="1"/>
</dbReference>
<dbReference type="CDD" id="cd01132">
    <property type="entry name" value="F1-ATPase_alpha_CD"/>
    <property type="match status" value="1"/>
</dbReference>
<dbReference type="FunFam" id="1.20.150.20:FF:000001">
    <property type="entry name" value="ATP synthase subunit alpha"/>
    <property type="match status" value="1"/>
</dbReference>
<dbReference type="FunFam" id="2.40.30.20:FF:000001">
    <property type="entry name" value="ATP synthase subunit alpha"/>
    <property type="match status" value="1"/>
</dbReference>
<dbReference type="FunFam" id="3.40.50.300:FF:000002">
    <property type="entry name" value="ATP synthase subunit alpha"/>
    <property type="match status" value="1"/>
</dbReference>
<dbReference type="Gene3D" id="2.40.30.20">
    <property type="match status" value="1"/>
</dbReference>
<dbReference type="Gene3D" id="1.20.150.20">
    <property type="entry name" value="ATP synthase alpha/beta chain, C-terminal domain"/>
    <property type="match status" value="1"/>
</dbReference>
<dbReference type="Gene3D" id="3.40.50.300">
    <property type="entry name" value="P-loop containing nucleotide triphosphate hydrolases"/>
    <property type="match status" value="1"/>
</dbReference>
<dbReference type="HAMAP" id="MF_01346">
    <property type="entry name" value="ATP_synth_alpha_bact"/>
    <property type="match status" value="1"/>
</dbReference>
<dbReference type="InterPro" id="IPR023366">
    <property type="entry name" value="ATP_synth_asu-like_sf"/>
</dbReference>
<dbReference type="InterPro" id="IPR000793">
    <property type="entry name" value="ATP_synth_asu_C"/>
</dbReference>
<dbReference type="InterPro" id="IPR038376">
    <property type="entry name" value="ATP_synth_asu_C_sf"/>
</dbReference>
<dbReference type="InterPro" id="IPR033732">
    <property type="entry name" value="ATP_synth_F1_a_nt-bd_dom"/>
</dbReference>
<dbReference type="InterPro" id="IPR005294">
    <property type="entry name" value="ATP_synth_F1_asu"/>
</dbReference>
<dbReference type="InterPro" id="IPR020003">
    <property type="entry name" value="ATPase_a/bsu_AS"/>
</dbReference>
<dbReference type="InterPro" id="IPR004100">
    <property type="entry name" value="ATPase_F1/V1/A1_a/bsu_N"/>
</dbReference>
<dbReference type="InterPro" id="IPR036121">
    <property type="entry name" value="ATPase_F1/V1/A1_a/bsu_N_sf"/>
</dbReference>
<dbReference type="InterPro" id="IPR000194">
    <property type="entry name" value="ATPase_F1/V1/A1_a/bsu_nucl-bd"/>
</dbReference>
<dbReference type="InterPro" id="IPR027417">
    <property type="entry name" value="P-loop_NTPase"/>
</dbReference>
<dbReference type="NCBIfam" id="TIGR00962">
    <property type="entry name" value="atpA"/>
    <property type="match status" value="1"/>
</dbReference>
<dbReference type="NCBIfam" id="NF009884">
    <property type="entry name" value="PRK13343.1"/>
    <property type="match status" value="1"/>
</dbReference>
<dbReference type="PANTHER" id="PTHR48082">
    <property type="entry name" value="ATP SYNTHASE SUBUNIT ALPHA, MITOCHONDRIAL"/>
    <property type="match status" value="1"/>
</dbReference>
<dbReference type="PANTHER" id="PTHR48082:SF2">
    <property type="entry name" value="ATP SYNTHASE SUBUNIT ALPHA, MITOCHONDRIAL"/>
    <property type="match status" value="1"/>
</dbReference>
<dbReference type="Pfam" id="PF00006">
    <property type="entry name" value="ATP-synt_ab"/>
    <property type="match status" value="1"/>
</dbReference>
<dbReference type="Pfam" id="PF00306">
    <property type="entry name" value="ATP-synt_ab_C"/>
    <property type="match status" value="1"/>
</dbReference>
<dbReference type="Pfam" id="PF02874">
    <property type="entry name" value="ATP-synt_ab_N"/>
    <property type="match status" value="1"/>
</dbReference>
<dbReference type="PIRSF" id="PIRSF039088">
    <property type="entry name" value="F_ATPase_subunit_alpha"/>
    <property type="match status" value="1"/>
</dbReference>
<dbReference type="SUPFAM" id="SSF47917">
    <property type="entry name" value="C-terminal domain of alpha and beta subunits of F1 ATP synthase"/>
    <property type="match status" value="1"/>
</dbReference>
<dbReference type="SUPFAM" id="SSF50615">
    <property type="entry name" value="N-terminal domain of alpha and beta subunits of F1 ATP synthase"/>
    <property type="match status" value="1"/>
</dbReference>
<dbReference type="SUPFAM" id="SSF52540">
    <property type="entry name" value="P-loop containing nucleoside triphosphate hydrolases"/>
    <property type="match status" value="1"/>
</dbReference>
<dbReference type="PROSITE" id="PS00152">
    <property type="entry name" value="ATPASE_ALPHA_BETA"/>
    <property type="match status" value="1"/>
</dbReference>
<reference key="1">
    <citation type="submission" date="2006-12" db="EMBL/GenBank/DDBJ databases">
        <title>Complete sequence of Halorhodospira halophila SL1.</title>
        <authorList>
            <consortium name="US DOE Joint Genome Institute"/>
            <person name="Copeland A."/>
            <person name="Lucas S."/>
            <person name="Lapidus A."/>
            <person name="Barry K."/>
            <person name="Detter J.C."/>
            <person name="Glavina del Rio T."/>
            <person name="Hammon N."/>
            <person name="Israni S."/>
            <person name="Dalin E."/>
            <person name="Tice H."/>
            <person name="Pitluck S."/>
            <person name="Saunders E."/>
            <person name="Brettin T."/>
            <person name="Bruce D."/>
            <person name="Han C."/>
            <person name="Tapia R."/>
            <person name="Schmutz J."/>
            <person name="Larimer F."/>
            <person name="Land M."/>
            <person name="Hauser L."/>
            <person name="Kyrpides N."/>
            <person name="Mikhailova N."/>
            <person name="Hoff W."/>
            <person name="Richardson P."/>
        </authorList>
    </citation>
    <scope>NUCLEOTIDE SEQUENCE [LARGE SCALE GENOMIC DNA]</scope>
    <source>
        <strain>DSM 244 / SL1</strain>
    </source>
</reference>
<organism>
    <name type="scientific">Halorhodospira halophila (strain DSM 244 / SL1)</name>
    <name type="common">Ectothiorhodospira halophila (strain DSM 244 / SL1)</name>
    <dbReference type="NCBI Taxonomy" id="349124"/>
    <lineage>
        <taxon>Bacteria</taxon>
        <taxon>Pseudomonadati</taxon>
        <taxon>Pseudomonadota</taxon>
        <taxon>Gammaproteobacteria</taxon>
        <taxon>Chromatiales</taxon>
        <taxon>Ectothiorhodospiraceae</taxon>
        <taxon>Halorhodospira</taxon>
    </lineage>
</organism>
<evidence type="ECO:0000255" key="1">
    <source>
        <dbReference type="HAMAP-Rule" id="MF_01346"/>
    </source>
</evidence>
<comment type="function">
    <text evidence="1">Produces ATP from ADP in the presence of a proton gradient across the membrane. The alpha chain is a regulatory subunit.</text>
</comment>
<comment type="catalytic activity">
    <reaction evidence="1">
        <text>ATP + H2O + 4 H(+)(in) = ADP + phosphate + 5 H(+)(out)</text>
        <dbReference type="Rhea" id="RHEA:57720"/>
        <dbReference type="ChEBI" id="CHEBI:15377"/>
        <dbReference type="ChEBI" id="CHEBI:15378"/>
        <dbReference type="ChEBI" id="CHEBI:30616"/>
        <dbReference type="ChEBI" id="CHEBI:43474"/>
        <dbReference type="ChEBI" id="CHEBI:456216"/>
        <dbReference type="EC" id="7.1.2.2"/>
    </reaction>
</comment>
<comment type="subunit">
    <text evidence="1">F-type ATPases have 2 components, CF(1) - the catalytic core - and CF(0) - the membrane proton channel. CF(1) has five subunits: alpha(3), beta(3), gamma(1), delta(1), epsilon(1). CF(0) has three main subunits: a(1), b(2) and c(9-12). The alpha and beta chains form an alternating ring which encloses part of the gamma chain. CF(1) is attached to CF(0) by a central stalk formed by the gamma and epsilon chains, while a peripheral stalk is formed by the delta and b chains.</text>
</comment>
<comment type="subcellular location">
    <subcellularLocation>
        <location evidence="1">Cell inner membrane</location>
        <topology evidence="1">Peripheral membrane protein</topology>
    </subcellularLocation>
</comment>
<comment type="similarity">
    <text evidence="1">Belongs to the ATPase alpha/beta chains family.</text>
</comment>
<gene>
    <name evidence="1" type="primary">atpA</name>
    <name type="ordered locus">Hhal_2432</name>
</gene>
<feature type="chain" id="PRO_0000302654" description="ATP synthase subunit alpha">
    <location>
        <begin position="1"/>
        <end position="513"/>
    </location>
</feature>
<feature type="binding site" evidence="1">
    <location>
        <begin position="169"/>
        <end position="176"/>
    </location>
    <ligand>
        <name>ATP</name>
        <dbReference type="ChEBI" id="CHEBI:30616"/>
    </ligand>
</feature>
<feature type="site" description="Required for activity" evidence="1">
    <location>
        <position position="373"/>
    </location>
</feature>